<comment type="function">
    <text evidence="1">Forms part of the ribosomal stalk which helps the ribosome interact with GTP-bound translation factors. Is thus essential for accurate translation.</text>
</comment>
<comment type="subunit">
    <text evidence="1">Homodimer. Part of the ribosomal stalk of the 50S ribosomal subunit. Forms a multimeric L10(L12)X complex, where L10 forms an elongated spine to which 2 to 4 L12 dimers bind in a sequential fashion. Binds GTP-bound translation factors.</text>
</comment>
<comment type="similarity">
    <text evidence="1">Belongs to the bacterial ribosomal protein bL12 family.</text>
</comment>
<gene>
    <name evidence="1" type="primary">rplL</name>
    <name type="ordered locus">Dhaf_0409</name>
</gene>
<organism>
    <name type="scientific">Desulfitobacterium hafniense (strain DSM 10664 / DCB-2)</name>
    <dbReference type="NCBI Taxonomy" id="272564"/>
    <lineage>
        <taxon>Bacteria</taxon>
        <taxon>Bacillati</taxon>
        <taxon>Bacillota</taxon>
        <taxon>Clostridia</taxon>
        <taxon>Eubacteriales</taxon>
        <taxon>Desulfitobacteriaceae</taxon>
        <taxon>Desulfitobacterium</taxon>
    </lineage>
</organism>
<accession>B8G1V3</accession>
<sequence>MSKTAEILEAVKGLTVLELAELVKAFEEEFGVSAAAPVAVAAAPGAAAAPVAEEQTEFDVVLMNAGAGKINVIKVVREITGLGLKEAKELVDGAPKPVKEKVSKDDAEAIKAKLVEAGATVEVK</sequence>
<evidence type="ECO:0000255" key="1">
    <source>
        <dbReference type="HAMAP-Rule" id="MF_00368"/>
    </source>
</evidence>
<evidence type="ECO:0000305" key="2"/>
<reference key="1">
    <citation type="journal article" date="2012" name="BMC Microbiol.">
        <title>Genome sequence of Desulfitobacterium hafniense DCB-2, a Gram-positive anaerobe capable of dehalogenation and metal reduction.</title>
        <authorList>
            <person name="Kim S.H."/>
            <person name="Harzman C."/>
            <person name="Davis J.K."/>
            <person name="Hutcheson R."/>
            <person name="Broderick J.B."/>
            <person name="Marsh T.L."/>
            <person name="Tiedje J.M."/>
        </authorList>
    </citation>
    <scope>NUCLEOTIDE SEQUENCE [LARGE SCALE GENOMIC DNA]</scope>
    <source>
        <strain>DSM 10664 / DCB-2</strain>
    </source>
</reference>
<dbReference type="EMBL" id="CP001336">
    <property type="protein sequence ID" value="ACL18476.1"/>
    <property type="molecule type" value="Genomic_DNA"/>
</dbReference>
<dbReference type="RefSeq" id="WP_011459089.1">
    <property type="nucleotide sequence ID" value="NC_011830.1"/>
</dbReference>
<dbReference type="SMR" id="B8G1V3"/>
<dbReference type="KEGG" id="dhd:Dhaf_0409"/>
<dbReference type="HOGENOM" id="CLU_086499_3_2_9"/>
<dbReference type="Proteomes" id="UP000007726">
    <property type="component" value="Chromosome"/>
</dbReference>
<dbReference type="GO" id="GO:0022625">
    <property type="term" value="C:cytosolic large ribosomal subunit"/>
    <property type="evidence" value="ECO:0007669"/>
    <property type="project" value="TreeGrafter"/>
</dbReference>
<dbReference type="GO" id="GO:0003729">
    <property type="term" value="F:mRNA binding"/>
    <property type="evidence" value="ECO:0007669"/>
    <property type="project" value="TreeGrafter"/>
</dbReference>
<dbReference type="GO" id="GO:0003735">
    <property type="term" value="F:structural constituent of ribosome"/>
    <property type="evidence" value="ECO:0007669"/>
    <property type="project" value="InterPro"/>
</dbReference>
<dbReference type="GO" id="GO:0006412">
    <property type="term" value="P:translation"/>
    <property type="evidence" value="ECO:0007669"/>
    <property type="project" value="UniProtKB-UniRule"/>
</dbReference>
<dbReference type="CDD" id="cd00387">
    <property type="entry name" value="Ribosomal_L7_L12"/>
    <property type="match status" value="1"/>
</dbReference>
<dbReference type="FunFam" id="3.30.1390.10:FF:000001">
    <property type="entry name" value="50S ribosomal protein L7/L12"/>
    <property type="match status" value="1"/>
</dbReference>
<dbReference type="Gene3D" id="3.30.1390.10">
    <property type="match status" value="1"/>
</dbReference>
<dbReference type="Gene3D" id="1.20.5.710">
    <property type="entry name" value="Single helix bin"/>
    <property type="match status" value="1"/>
</dbReference>
<dbReference type="HAMAP" id="MF_00368">
    <property type="entry name" value="Ribosomal_bL12"/>
    <property type="match status" value="1"/>
</dbReference>
<dbReference type="InterPro" id="IPR000206">
    <property type="entry name" value="Ribosomal_bL12"/>
</dbReference>
<dbReference type="InterPro" id="IPR013823">
    <property type="entry name" value="Ribosomal_bL12_C"/>
</dbReference>
<dbReference type="InterPro" id="IPR014719">
    <property type="entry name" value="Ribosomal_bL12_C/ClpS-like"/>
</dbReference>
<dbReference type="InterPro" id="IPR008932">
    <property type="entry name" value="Ribosomal_bL12_oligo"/>
</dbReference>
<dbReference type="InterPro" id="IPR036235">
    <property type="entry name" value="Ribosomal_bL12_oligo_N_sf"/>
</dbReference>
<dbReference type="NCBIfam" id="TIGR00855">
    <property type="entry name" value="L12"/>
    <property type="match status" value="1"/>
</dbReference>
<dbReference type="PANTHER" id="PTHR45987">
    <property type="entry name" value="39S RIBOSOMAL PROTEIN L12"/>
    <property type="match status" value="1"/>
</dbReference>
<dbReference type="PANTHER" id="PTHR45987:SF4">
    <property type="entry name" value="LARGE RIBOSOMAL SUBUNIT PROTEIN BL12M"/>
    <property type="match status" value="1"/>
</dbReference>
<dbReference type="Pfam" id="PF00542">
    <property type="entry name" value="Ribosomal_L12"/>
    <property type="match status" value="1"/>
</dbReference>
<dbReference type="Pfam" id="PF16320">
    <property type="entry name" value="Ribosomal_L12_N"/>
    <property type="match status" value="1"/>
</dbReference>
<dbReference type="SUPFAM" id="SSF54736">
    <property type="entry name" value="ClpS-like"/>
    <property type="match status" value="1"/>
</dbReference>
<dbReference type="SUPFAM" id="SSF48300">
    <property type="entry name" value="Ribosomal protein L7/12, oligomerisation (N-terminal) domain"/>
    <property type="match status" value="1"/>
</dbReference>
<keyword id="KW-0687">Ribonucleoprotein</keyword>
<keyword id="KW-0689">Ribosomal protein</keyword>
<feature type="chain" id="PRO_1000195789" description="Large ribosomal subunit protein bL12">
    <location>
        <begin position="1"/>
        <end position="124"/>
    </location>
</feature>
<proteinExistence type="inferred from homology"/>
<protein>
    <recommendedName>
        <fullName evidence="1">Large ribosomal subunit protein bL12</fullName>
    </recommendedName>
    <alternativeName>
        <fullName evidence="2">50S ribosomal protein L7/L12</fullName>
    </alternativeName>
</protein>
<name>RL7_DESHD</name>